<gene>
    <name evidence="3" type="primary">PACC1</name>
    <name evidence="3" type="synonym">TMEM206</name>
</gene>
<keyword id="KW-1003">Cell membrane</keyword>
<keyword id="KW-0868">Chloride</keyword>
<keyword id="KW-0869">Chloride channel</keyword>
<keyword id="KW-0325">Glycoprotein</keyword>
<keyword id="KW-0407">Ion channel</keyword>
<keyword id="KW-0406">Ion transport</keyword>
<keyword id="KW-0472">Membrane</keyword>
<keyword id="KW-0597">Phosphoprotein</keyword>
<keyword id="KW-1185">Reference proteome</keyword>
<keyword id="KW-0812">Transmembrane</keyword>
<keyword id="KW-1133">Transmembrane helix</keyword>
<keyword id="KW-0813">Transport</keyword>
<comment type="function">
    <text evidence="3">Chloride channel gated by pH that facilitates the entry of chloride ions into cells upon exposure to extracellular acidic pH. Involved in acidosis-induced cell death by mediating chloride influx and subsequent cell swelling.</text>
</comment>
<comment type="catalytic activity">
    <reaction evidence="3">
        <text>chloride(in) = chloride(out)</text>
        <dbReference type="Rhea" id="RHEA:29823"/>
        <dbReference type="ChEBI" id="CHEBI:17996"/>
    </reaction>
</comment>
<comment type="subcellular location">
    <subcellularLocation>
        <location evidence="3">Cell membrane</location>
        <topology evidence="3">Multi-pass membrane protein</topology>
    </subcellularLocation>
</comment>
<comment type="similarity">
    <text evidence="5">Belongs to the proton-activated chloride channel family.</text>
</comment>
<evidence type="ECO:0000250" key="1">
    <source>
        <dbReference type="UniProtKB" id="Q66H28"/>
    </source>
</evidence>
<evidence type="ECO:0000250" key="2">
    <source>
        <dbReference type="UniProtKB" id="Q9D771"/>
    </source>
</evidence>
<evidence type="ECO:0000250" key="3">
    <source>
        <dbReference type="UniProtKB" id="Q9H813"/>
    </source>
</evidence>
<evidence type="ECO:0000255" key="4"/>
<evidence type="ECO:0000305" key="5"/>
<reference key="1">
    <citation type="submission" date="2006-01" db="EMBL/GenBank/DDBJ databases">
        <authorList>
            <consortium name="NIH - Mammalian Gene Collection (MGC) project"/>
        </authorList>
    </citation>
    <scope>NUCLEOTIDE SEQUENCE [LARGE SCALE MRNA]</scope>
    <source>
        <strain>Hereford</strain>
        <tissue>Hypothalamus</tissue>
    </source>
</reference>
<name>PACC1_BOVIN</name>
<accession>Q2KHV2</accession>
<proteinExistence type="evidence at transcript level"/>
<dbReference type="EMBL" id="BC112871">
    <property type="protein sequence ID" value="AAI12872.1"/>
    <property type="molecule type" value="mRNA"/>
</dbReference>
<dbReference type="RefSeq" id="NP_001040045.1">
    <property type="nucleotide sequence ID" value="NM_001046580.2"/>
</dbReference>
<dbReference type="SMR" id="Q2KHV2"/>
<dbReference type="FunCoup" id="Q2KHV2">
    <property type="interactions" value="1649"/>
</dbReference>
<dbReference type="STRING" id="9913.ENSBTAP00000001006"/>
<dbReference type="GlyCosmos" id="Q2KHV2">
    <property type="glycosylation" value="2 sites, No reported glycans"/>
</dbReference>
<dbReference type="GlyGen" id="Q2KHV2">
    <property type="glycosylation" value="2 sites"/>
</dbReference>
<dbReference type="PaxDb" id="9913-ENSBTAP00000055839"/>
<dbReference type="Ensembl" id="ENSBTAT00000094767.1">
    <property type="protein sequence ID" value="ENSBTAP00000090457.1"/>
    <property type="gene ID" value="ENSBTAG00000000758.7"/>
</dbReference>
<dbReference type="GeneID" id="616392"/>
<dbReference type="KEGG" id="bta:616392"/>
<dbReference type="CTD" id="55248"/>
<dbReference type="VEuPathDB" id="HostDB:ENSBTAG00000000758"/>
<dbReference type="VGNC" id="VGNC:36028">
    <property type="gene designation" value="PACC1"/>
</dbReference>
<dbReference type="eggNOG" id="ENOG502QS5H">
    <property type="taxonomic scope" value="Eukaryota"/>
</dbReference>
<dbReference type="GeneTree" id="ENSGT00390000017528"/>
<dbReference type="HOGENOM" id="CLU_068069_0_0_1"/>
<dbReference type="InParanoid" id="Q2KHV2"/>
<dbReference type="OMA" id="EFMRDCE"/>
<dbReference type="OrthoDB" id="10069062at2759"/>
<dbReference type="Proteomes" id="UP000009136">
    <property type="component" value="Chromosome 16"/>
</dbReference>
<dbReference type="Bgee" id="ENSBTAG00000000758">
    <property type="expression patterns" value="Expressed in thymus and 103 other cell types or tissues"/>
</dbReference>
<dbReference type="GO" id="GO:0034707">
    <property type="term" value="C:chloride channel complex"/>
    <property type="evidence" value="ECO:0007669"/>
    <property type="project" value="UniProtKB-KW"/>
</dbReference>
<dbReference type="GO" id="GO:0005886">
    <property type="term" value="C:plasma membrane"/>
    <property type="evidence" value="ECO:0000250"/>
    <property type="project" value="UniProtKB"/>
</dbReference>
<dbReference type="GO" id="GO:0061797">
    <property type="term" value="F:pH-gated chloride channel activity"/>
    <property type="evidence" value="ECO:0000250"/>
    <property type="project" value="UniProtKB"/>
</dbReference>
<dbReference type="GO" id="GO:0006821">
    <property type="term" value="P:chloride transport"/>
    <property type="evidence" value="ECO:0000250"/>
    <property type="project" value="UniProtKB"/>
</dbReference>
<dbReference type="InterPro" id="IPR029366">
    <property type="entry name" value="TMEM206"/>
</dbReference>
<dbReference type="PANTHER" id="PTHR16087:SF0">
    <property type="entry name" value="PROTON-ACTIVATED CHLORIDE CHANNEL"/>
    <property type="match status" value="1"/>
</dbReference>
<dbReference type="PANTHER" id="PTHR16087">
    <property type="entry name" value="TRANSMEMBRANE PROTEIN 206"/>
    <property type="match status" value="1"/>
</dbReference>
<dbReference type="Pfam" id="PF15122">
    <property type="entry name" value="TMEM206"/>
    <property type="match status" value="1"/>
</dbReference>
<organism>
    <name type="scientific">Bos taurus</name>
    <name type="common">Bovine</name>
    <dbReference type="NCBI Taxonomy" id="9913"/>
    <lineage>
        <taxon>Eukaryota</taxon>
        <taxon>Metazoa</taxon>
        <taxon>Chordata</taxon>
        <taxon>Craniata</taxon>
        <taxon>Vertebrata</taxon>
        <taxon>Euteleostomi</taxon>
        <taxon>Mammalia</taxon>
        <taxon>Eutheria</taxon>
        <taxon>Laurasiatheria</taxon>
        <taxon>Artiodactyla</taxon>
        <taxon>Ruminantia</taxon>
        <taxon>Pecora</taxon>
        <taxon>Bovidae</taxon>
        <taxon>Bovinae</taxon>
        <taxon>Bos</taxon>
    </lineage>
</organism>
<feature type="chain" id="PRO_0000279470" description="Proton-activated chloride channel">
    <location>
        <begin position="1"/>
        <end position="350"/>
    </location>
</feature>
<feature type="topological domain" description="Cytoplasmic" evidence="3">
    <location>
        <begin position="1"/>
        <end position="64"/>
    </location>
</feature>
<feature type="transmembrane region" description="Helical" evidence="4">
    <location>
        <begin position="65"/>
        <end position="85"/>
    </location>
</feature>
<feature type="topological domain" description="Extracellular" evidence="4">
    <location>
        <begin position="86"/>
        <end position="301"/>
    </location>
</feature>
<feature type="transmembrane region" description="Helical" evidence="4">
    <location>
        <begin position="302"/>
        <end position="318"/>
    </location>
</feature>
<feature type="topological domain" description="Cytoplasmic" evidence="3">
    <location>
        <begin position="319"/>
        <end position="350"/>
    </location>
</feature>
<feature type="modified residue" description="Phosphoserine" evidence="3">
    <location>
        <position position="9"/>
    </location>
</feature>
<feature type="modified residue" description="Phosphotyrosine" evidence="2">
    <location>
        <position position="10"/>
    </location>
</feature>
<feature type="modified residue" description="Phosphoserine" evidence="2">
    <location>
        <position position="14"/>
    </location>
</feature>
<feature type="modified residue" description="Phosphoserine" evidence="1">
    <location>
        <position position="24"/>
    </location>
</feature>
<feature type="glycosylation site" description="N-linked (GlcNAc...) asparagine" evidence="4">
    <location>
        <position position="155"/>
    </location>
</feature>
<feature type="glycosylation site" description="N-linked (GlcNAc...) asparagine" evidence="4">
    <location>
        <position position="162"/>
    </location>
</feature>
<protein>
    <recommendedName>
        <fullName evidence="3">Proton-activated chloride channel</fullName>
        <shortName evidence="3">PAC</shortName>
    </recommendedName>
    <alternativeName>
        <fullName evidence="5">Transmembrane protein 206</fullName>
    </alternativeName>
</protein>
<sequence length="350" mass="40135">MIRQELSTSYQELSEELDQVVENSEQADERDKETVKVHGPGILPALDSESASSSIRFSKACLKNVFSVLLIFIYLLLMAVAVFLVYQTIMDFREKLKHPVMSVSYKEVDRYDAPGIALYPGQAQLLSCKHYYEVIPPLRSPGQPGDVNCTTQRVNYTDPFSNQTLKSALIVRGPREVQKRELVFLQFRLNQSSEDFSAIDYLLFSSFQEFLQSPDRAGFMQACESAYSSWKFSGGFRTWVKMSLVETKEEDGREAVEFRQETSVVNYIDQRPAAEKSAQLFFVVFEWKDPFIQKVQDIITANPWNTIALLCGAFLALFKAAEFAKLSVKWMIKIRRRYLKKRGQATNHIS</sequence>